<proteinExistence type="evidence at transcript level"/>
<sequence length="268" mass="30110">MVSWIISRMVVLAFGTLYPAYSSYKAVKTKNVKEYVKWMMYWIVFALFTTAETITDMLLSWFPFYFELKIAFVIWLLSPYTKGSSVLYRKFVHPTLSNKEREIDEYITQAKDRSYDTMMRFGRRGLNIAATAAVTAATKGQGVLSEKLRSFSMQDLTLIQNEDELQLEGGDDTHTAATLPRAKTATRTVRATPVPADTESQHSSRSDDQSDSRTEHSDEDAADKAPKRIAITRAAKKPAAAKTEQTTKTVKKAPKKKPTTANNVAESP</sequence>
<evidence type="ECO:0000250" key="1"/>
<evidence type="ECO:0000255" key="2"/>
<evidence type="ECO:0000256" key="3">
    <source>
        <dbReference type="SAM" id="MobiDB-lite"/>
    </source>
</evidence>
<evidence type="ECO:0000305" key="4"/>
<reference key="1">
    <citation type="submission" date="2005-07" db="EMBL/GenBank/DDBJ databases">
        <authorList>
            <consortium name="NIH - Zebrafish Gene Collection (ZGC) project"/>
        </authorList>
    </citation>
    <scope>NUCLEOTIDE SEQUENCE [LARGE SCALE MRNA]</scope>
    <source>
        <tissue>Brain</tissue>
    </source>
</reference>
<accession>Q4KMI4</accession>
<dbReference type="EMBL" id="BC098549">
    <property type="protein sequence ID" value="AAH98549.1"/>
    <property type="molecule type" value="mRNA"/>
</dbReference>
<dbReference type="RefSeq" id="NP_001025398.1">
    <property type="nucleotide sequence ID" value="NM_001030227.1"/>
</dbReference>
<dbReference type="SMR" id="Q4KMI4"/>
<dbReference type="FunCoup" id="Q4KMI4">
    <property type="interactions" value="157"/>
</dbReference>
<dbReference type="STRING" id="7955.ENSDARP00000043161"/>
<dbReference type="PaxDb" id="7955-ENSDARP00000043161"/>
<dbReference type="GeneID" id="568927"/>
<dbReference type="KEGG" id="dre:568927"/>
<dbReference type="AGR" id="ZFIN:ZDB-GENE-050706-125"/>
<dbReference type="CTD" id="51308"/>
<dbReference type="ZFIN" id="ZDB-GENE-050706-125">
    <property type="gene designation" value="reep2"/>
</dbReference>
<dbReference type="eggNOG" id="KOG1726">
    <property type="taxonomic scope" value="Eukaryota"/>
</dbReference>
<dbReference type="InParanoid" id="Q4KMI4"/>
<dbReference type="OrthoDB" id="434647at2759"/>
<dbReference type="PhylomeDB" id="Q4KMI4"/>
<dbReference type="PRO" id="PR:Q4KMI4"/>
<dbReference type="Proteomes" id="UP000000437">
    <property type="component" value="Alternate scaffold 14"/>
</dbReference>
<dbReference type="Proteomes" id="UP000000437">
    <property type="component" value="Chromosome 14"/>
</dbReference>
<dbReference type="GO" id="GO:0005881">
    <property type="term" value="C:cytoplasmic microtubule"/>
    <property type="evidence" value="ECO:0000250"/>
    <property type="project" value="UniProtKB"/>
</dbReference>
<dbReference type="GO" id="GO:0005789">
    <property type="term" value="C:endoplasmic reticulum membrane"/>
    <property type="evidence" value="ECO:0000318"/>
    <property type="project" value="GO_Central"/>
</dbReference>
<dbReference type="GO" id="GO:0071782">
    <property type="term" value="C:endoplasmic reticulum tubular network"/>
    <property type="evidence" value="ECO:0000318"/>
    <property type="project" value="GO_Central"/>
</dbReference>
<dbReference type="GO" id="GO:0008017">
    <property type="term" value="F:microtubule binding"/>
    <property type="evidence" value="ECO:0000318"/>
    <property type="project" value="GO_Central"/>
</dbReference>
<dbReference type="GO" id="GO:0031883">
    <property type="term" value="F:taste receptor binding"/>
    <property type="evidence" value="ECO:0000318"/>
    <property type="project" value="GO_Central"/>
</dbReference>
<dbReference type="GO" id="GO:0071786">
    <property type="term" value="P:endoplasmic reticulum tubular network organization"/>
    <property type="evidence" value="ECO:0000318"/>
    <property type="project" value="GO_Central"/>
</dbReference>
<dbReference type="InterPro" id="IPR004345">
    <property type="entry name" value="TB2_DP1_HVA22"/>
</dbReference>
<dbReference type="PANTHER" id="PTHR12300">
    <property type="entry name" value="HVA22-LIKE PROTEINS"/>
    <property type="match status" value="1"/>
</dbReference>
<dbReference type="PANTHER" id="PTHR12300:SF29">
    <property type="entry name" value="RECEPTOR EXPRESSION-ENHANCING PROTEIN 2"/>
    <property type="match status" value="1"/>
</dbReference>
<dbReference type="Pfam" id="PF03134">
    <property type="entry name" value="TB2_DP1_HVA22"/>
    <property type="match status" value="1"/>
</dbReference>
<feature type="chain" id="PRO_0000101825" description="Receptor expression-enhancing protein 2">
    <location>
        <begin position="1"/>
        <end position="268"/>
    </location>
</feature>
<feature type="transmembrane region" description="Helical" evidence="2">
    <location>
        <begin position="1"/>
        <end position="21"/>
    </location>
</feature>
<feature type="transmembrane region" description="Helical" evidence="2">
    <location>
        <begin position="35"/>
        <end position="55"/>
    </location>
</feature>
<feature type="region of interest" description="Disordered" evidence="3">
    <location>
        <begin position="170"/>
        <end position="268"/>
    </location>
</feature>
<feature type="compositionally biased region" description="Low complexity" evidence="3">
    <location>
        <begin position="180"/>
        <end position="196"/>
    </location>
</feature>
<feature type="compositionally biased region" description="Basic and acidic residues" evidence="3">
    <location>
        <begin position="199"/>
        <end position="216"/>
    </location>
</feature>
<feature type="compositionally biased region" description="Low complexity" evidence="3">
    <location>
        <begin position="228"/>
        <end position="248"/>
    </location>
</feature>
<feature type="compositionally biased region" description="Basic residues" evidence="3">
    <location>
        <begin position="249"/>
        <end position="258"/>
    </location>
</feature>
<protein>
    <recommendedName>
        <fullName>Receptor expression-enhancing protein 2</fullName>
    </recommendedName>
</protein>
<comment type="function">
    <text evidence="1">May enhance the cell surface expression of odorant receptors.</text>
</comment>
<comment type="subunit">
    <text evidence="1">Interacts with odorant receptor proteins.</text>
</comment>
<comment type="subcellular location">
    <subcellularLocation>
        <location evidence="1">Membrane</location>
        <topology evidence="1">Multi-pass membrane protein</topology>
    </subcellularLocation>
</comment>
<comment type="similarity">
    <text evidence="4">Belongs to the DP1 family.</text>
</comment>
<name>REEP2_DANRE</name>
<organism>
    <name type="scientific">Danio rerio</name>
    <name type="common">Zebrafish</name>
    <name type="synonym">Brachydanio rerio</name>
    <dbReference type="NCBI Taxonomy" id="7955"/>
    <lineage>
        <taxon>Eukaryota</taxon>
        <taxon>Metazoa</taxon>
        <taxon>Chordata</taxon>
        <taxon>Craniata</taxon>
        <taxon>Vertebrata</taxon>
        <taxon>Euteleostomi</taxon>
        <taxon>Actinopterygii</taxon>
        <taxon>Neopterygii</taxon>
        <taxon>Teleostei</taxon>
        <taxon>Ostariophysi</taxon>
        <taxon>Cypriniformes</taxon>
        <taxon>Danionidae</taxon>
        <taxon>Danioninae</taxon>
        <taxon>Danio</taxon>
    </lineage>
</organism>
<gene>
    <name type="primary">reep2</name>
    <name type="ORF">zgc:110128</name>
</gene>
<keyword id="KW-0472">Membrane</keyword>
<keyword id="KW-1185">Reference proteome</keyword>
<keyword id="KW-0812">Transmembrane</keyword>
<keyword id="KW-1133">Transmembrane helix</keyword>